<proteinExistence type="inferred from homology"/>
<comment type="catalytic activity">
    <reaction evidence="1">
        <text>tRNA(Leu) + L-leucine + ATP = L-leucyl-tRNA(Leu) + AMP + diphosphate</text>
        <dbReference type="Rhea" id="RHEA:11688"/>
        <dbReference type="Rhea" id="RHEA-COMP:9613"/>
        <dbReference type="Rhea" id="RHEA-COMP:9622"/>
        <dbReference type="ChEBI" id="CHEBI:30616"/>
        <dbReference type="ChEBI" id="CHEBI:33019"/>
        <dbReference type="ChEBI" id="CHEBI:57427"/>
        <dbReference type="ChEBI" id="CHEBI:78442"/>
        <dbReference type="ChEBI" id="CHEBI:78494"/>
        <dbReference type="ChEBI" id="CHEBI:456215"/>
        <dbReference type="EC" id="6.1.1.4"/>
    </reaction>
</comment>
<comment type="subcellular location">
    <subcellularLocation>
        <location evidence="1">Cytoplasm</location>
    </subcellularLocation>
</comment>
<comment type="similarity">
    <text evidence="1">Belongs to the class-I aminoacyl-tRNA synthetase family.</text>
</comment>
<comment type="sequence caution" evidence="2">
    <conflict type="erroneous initiation">
        <sequence resource="EMBL-CDS" id="AAO29080"/>
    </conflict>
</comment>
<name>SYL_XYLFT</name>
<dbReference type="EC" id="6.1.1.4" evidence="1"/>
<dbReference type="EMBL" id="AE009442">
    <property type="protein sequence ID" value="AAO29080.1"/>
    <property type="status" value="ALT_INIT"/>
    <property type="molecule type" value="Genomic_DNA"/>
</dbReference>
<dbReference type="RefSeq" id="WP_004088586.1">
    <property type="nucleotide sequence ID" value="NC_004556.1"/>
</dbReference>
<dbReference type="SMR" id="Q87C65"/>
<dbReference type="GeneID" id="93905030"/>
<dbReference type="KEGG" id="xft:PD_1230"/>
<dbReference type="HOGENOM" id="CLU_004427_0_0_6"/>
<dbReference type="Proteomes" id="UP000002516">
    <property type="component" value="Chromosome"/>
</dbReference>
<dbReference type="GO" id="GO:0005829">
    <property type="term" value="C:cytosol"/>
    <property type="evidence" value="ECO:0007669"/>
    <property type="project" value="TreeGrafter"/>
</dbReference>
<dbReference type="GO" id="GO:0002161">
    <property type="term" value="F:aminoacyl-tRNA deacylase activity"/>
    <property type="evidence" value="ECO:0007669"/>
    <property type="project" value="InterPro"/>
</dbReference>
<dbReference type="GO" id="GO:0005524">
    <property type="term" value="F:ATP binding"/>
    <property type="evidence" value="ECO:0007669"/>
    <property type="project" value="UniProtKB-UniRule"/>
</dbReference>
<dbReference type="GO" id="GO:0004823">
    <property type="term" value="F:leucine-tRNA ligase activity"/>
    <property type="evidence" value="ECO:0007669"/>
    <property type="project" value="UniProtKB-UniRule"/>
</dbReference>
<dbReference type="GO" id="GO:0006429">
    <property type="term" value="P:leucyl-tRNA aminoacylation"/>
    <property type="evidence" value="ECO:0007669"/>
    <property type="project" value="UniProtKB-UniRule"/>
</dbReference>
<dbReference type="CDD" id="cd07958">
    <property type="entry name" value="Anticodon_Ia_Leu_BEm"/>
    <property type="match status" value="1"/>
</dbReference>
<dbReference type="CDD" id="cd00812">
    <property type="entry name" value="LeuRS_core"/>
    <property type="match status" value="1"/>
</dbReference>
<dbReference type="FunFam" id="1.10.730.10:FF:000003">
    <property type="entry name" value="Leucine--tRNA ligase"/>
    <property type="match status" value="1"/>
</dbReference>
<dbReference type="FunFam" id="2.20.28.290:FF:000001">
    <property type="entry name" value="Leucine--tRNA ligase"/>
    <property type="match status" value="1"/>
</dbReference>
<dbReference type="FunFam" id="3.10.20.590:FF:000001">
    <property type="entry name" value="Leucine--tRNA ligase"/>
    <property type="match status" value="1"/>
</dbReference>
<dbReference type="FunFam" id="3.40.50.620:FF:000003">
    <property type="entry name" value="Leucine--tRNA ligase"/>
    <property type="match status" value="1"/>
</dbReference>
<dbReference type="FunFam" id="3.40.50.620:FF:000124">
    <property type="entry name" value="Leucine--tRNA ligase"/>
    <property type="match status" value="1"/>
</dbReference>
<dbReference type="FunFam" id="3.90.740.10:FF:000012">
    <property type="entry name" value="Leucine--tRNA ligase"/>
    <property type="match status" value="1"/>
</dbReference>
<dbReference type="Gene3D" id="2.20.28.290">
    <property type="match status" value="1"/>
</dbReference>
<dbReference type="Gene3D" id="3.10.20.590">
    <property type="match status" value="1"/>
</dbReference>
<dbReference type="Gene3D" id="3.40.50.620">
    <property type="entry name" value="HUPs"/>
    <property type="match status" value="2"/>
</dbReference>
<dbReference type="Gene3D" id="1.10.730.10">
    <property type="entry name" value="Isoleucyl-tRNA Synthetase, Domain 1"/>
    <property type="match status" value="1"/>
</dbReference>
<dbReference type="Gene3D" id="3.90.740.10">
    <property type="entry name" value="Valyl/Leucyl/Isoleucyl-tRNA synthetase, editing domain"/>
    <property type="match status" value="1"/>
</dbReference>
<dbReference type="HAMAP" id="MF_00049_B">
    <property type="entry name" value="Leu_tRNA_synth_B"/>
    <property type="match status" value="1"/>
</dbReference>
<dbReference type="InterPro" id="IPR001412">
    <property type="entry name" value="aa-tRNA-synth_I_CS"/>
</dbReference>
<dbReference type="InterPro" id="IPR002300">
    <property type="entry name" value="aa-tRNA-synth_Ia"/>
</dbReference>
<dbReference type="InterPro" id="IPR002302">
    <property type="entry name" value="Leu-tRNA-ligase"/>
</dbReference>
<dbReference type="InterPro" id="IPR025709">
    <property type="entry name" value="Leu_tRNA-synth_edit"/>
</dbReference>
<dbReference type="InterPro" id="IPR013155">
    <property type="entry name" value="M/V/L/I-tRNA-synth_anticd-bd"/>
</dbReference>
<dbReference type="InterPro" id="IPR015413">
    <property type="entry name" value="Methionyl/Leucyl_tRNA_Synth"/>
</dbReference>
<dbReference type="InterPro" id="IPR014729">
    <property type="entry name" value="Rossmann-like_a/b/a_fold"/>
</dbReference>
<dbReference type="InterPro" id="IPR009080">
    <property type="entry name" value="tRNAsynth_Ia_anticodon-bd"/>
</dbReference>
<dbReference type="InterPro" id="IPR009008">
    <property type="entry name" value="Val/Leu/Ile-tRNA-synth_edit"/>
</dbReference>
<dbReference type="NCBIfam" id="TIGR00396">
    <property type="entry name" value="leuS_bact"/>
    <property type="match status" value="1"/>
</dbReference>
<dbReference type="PANTHER" id="PTHR43740:SF2">
    <property type="entry name" value="LEUCINE--TRNA LIGASE, MITOCHONDRIAL"/>
    <property type="match status" value="1"/>
</dbReference>
<dbReference type="PANTHER" id="PTHR43740">
    <property type="entry name" value="LEUCYL-TRNA SYNTHETASE"/>
    <property type="match status" value="1"/>
</dbReference>
<dbReference type="Pfam" id="PF08264">
    <property type="entry name" value="Anticodon_1"/>
    <property type="match status" value="1"/>
</dbReference>
<dbReference type="Pfam" id="PF00133">
    <property type="entry name" value="tRNA-synt_1"/>
    <property type="match status" value="2"/>
</dbReference>
<dbReference type="Pfam" id="PF13603">
    <property type="entry name" value="tRNA-synt_1_2"/>
    <property type="match status" value="1"/>
</dbReference>
<dbReference type="Pfam" id="PF09334">
    <property type="entry name" value="tRNA-synt_1g"/>
    <property type="match status" value="1"/>
</dbReference>
<dbReference type="PRINTS" id="PR00985">
    <property type="entry name" value="TRNASYNTHLEU"/>
</dbReference>
<dbReference type="SUPFAM" id="SSF47323">
    <property type="entry name" value="Anticodon-binding domain of a subclass of class I aminoacyl-tRNA synthetases"/>
    <property type="match status" value="1"/>
</dbReference>
<dbReference type="SUPFAM" id="SSF52374">
    <property type="entry name" value="Nucleotidylyl transferase"/>
    <property type="match status" value="1"/>
</dbReference>
<dbReference type="SUPFAM" id="SSF50677">
    <property type="entry name" value="ValRS/IleRS/LeuRS editing domain"/>
    <property type="match status" value="1"/>
</dbReference>
<dbReference type="PROSITE" id="PS00178">
    <property type="entry name" value="AA_TRNA_LIGASE_I"/>
    <property type="match status" value="1"/>
</dbReference>
<feature type="chain" id="PRO_0000152123" description="Leucine--tRNA ligase">
    <location>
        <begin position="1"/>
        <end position="879"/>
    </location>
</feature>
<feature type="short sequence motif" description="'HIGH' region">
    <location>
        <begin position="45"/>
        <end position="55"/>
    </location>
</feature>
<feature type="short sequence motif" description="'KMSKS' region">
    <location>
        <begin position="637"/>
        <end position="641"/>
    </location>
</feature>
<feature type="binding site" evidence="1">
    <location>
        <position position="640"/>
    </location>
    <ligand>
        <name>ATP</name>
        <dbReference type="ChEBI" id="CHEBI:30616"/>
    </ligand>
</feature>
<protein>
    <recommendedName>
        <fullName evidence="1">Leucine--tRNA ligase</fullName>
        <ecNumber evidence="1">6.1.1.4</ecNumber>
    </recommendedName>
    <alternativeName>
        <fullName evidence="1">Leucyl-tRNA synthetase</fullName>
        <shortName evidence="1">LeuRS</shortName>
    </alternativeName>
</protein>
<organism>
    <name type="scientific">Xylella fastidiosa (strain Temecula1 / ATCC 700964)</name>
    <dbReference type="NCBI Taxonomy" id="183190"/>
    <lineage>
        <taxon>Bacteria</taxon>
        <taxon>Pseudomonadati</taxon>
        <taxon>Pseudomonadota</taxon>
        <taxon>Gammaproteobacteria</taxon>
        <taxon>Lysobacterales</taxon>
        <taxon>Lysobacteraceae</taxon>
        <taxon>Xylella</taxon>
    </lineage>
</organism>
<evidence type="ECO:0000255" key="1">
    <source>
        <dbReference type="HAMAP-Rule" id="MF_00049"/>
    </source>
</evidence>
<evidence type="ECO:0000305" key="2"/>
<sequence>MPTEANTYDPQRIESTAQHYWDSTHAFEVNEHSNKPKYYCLSMLPYPSGALHMGHVRNYTIGDVISRYKRMTGHNVLQPMGWDAFGLPAENAAIKNKVAPAQWTYKNIERMRTQLKSLGYAINWSREFATCQPDYYVHEQHMFTRLMRKGLAYRRNALVNWDPVDQTVLANEQVIDGRGWRSGAPVEKREIPQWFLRITDYAQELLDGLNTLDDWPEPVKTMQRNWIGRSEGLEIRFEVRDVDNNALEALRVFTTRPDTLFGVTFVSIAPEHPLALHAAKSNPGLAGLLTQMKQGGLSEAELKTQEKRGMDTGLKAIHPITNEQLPVWVANFVLMAYGTGAVMAVPGHDQRDQEFANKYGLPIRQVIALKEPKNQDESTWEPDVWRDWYADKTREFELINSAEFDGLDYQGAFEVLAERFERQGRGQRRVNYRLRDWGVSRQRYWGCPIPVIYCPTCGAVPVPENQLPVILPENVAFSGTGSPIKTDPEWRKTTCPECGGPAERETDTFDTFMESSWYYARYTSPNAREMLDKRANYWLPVDQYIGGIEHAILHLMYFRFYHKLMRDARLVDSDEPAINLLTQGMVIAETFYRKNPDGSKDWINPADVNVECDERGRITGATLISDGQPVLIGATEKMSKSKNNGVDPQIMVTKYGADTVRLFSMFAAPPEQSLEWNETGVEGMARFLRRLWTQVHHHASHGPATALDITALDTAQKAIRCKTHNTIARVEDDYGRRRSFNTAIAAVMELSNTLARFDDTTTQSHAVRQEALETMVLLLNPITPHTSHALWQTLGHPETLLEDLPFPKVDTTALVRETAILAVQINGKLRGTIEVATDAPREHIENNALTEPNTARFLEGLTVLKIIIVPGKIVNIVAR</sequence>
<gene>
    <name evidence="1" type="primary">leuS</name>
    <name type="ordered locus">PD_1230</name>
</gene>
<reference key="1">
    <citation type="journal article" date="2003" name="J. Bacteriol.">
        <title>Comparative analyses of the complete genome sequences of Pierce's disease and citrus variegated chlorosis strains of Xylella fastidiosa.</title>
        <authorList>
            <person name="Van Sluys M.A."/>
            <person name="de Oliveira M.C."/>
            <person name="Monteiro-Vitorello C.B."/>
            <person name="Miyaki C.Y."/>
            <person name="Furlan L.R."/>
            <person name="Camargo L.E.A."/>
            <person name="da Silva A.C.R."/>
            <person name="Moon D.H."/>
            <person name="Takita M.A."/>
            <person name="Lemos E.G.M."/>
            <person name="Machado M.A."/>
            <person name="Ferro M.I.T."/>
            <person name="da Silva F.R."/>
            <person name="Goldman M.H.S."/>
            <person name="Goldman G.H."/>
            <person name="Lemos M.V.F."/>
            <person name="El-Dorry H."/>
            <person name="Tsai S.M."/>
            <person name="Carrer H."/>
            <person name="Carraro D.M."/>
            <person name="de Oliveira R.C."/>
            <person name="Nunes L.R."/>
            <person name="Siqueira W.J."/>
            <person name="Coutinho L.L."/>
            <person name="Kimura E.T."/>
            <person name="Ferro E.S."/>
            <person name="Harakava R."/>
            <person name="Kuramae E.E."/>
            <person name="Marino C.L."/>
            <person name="Giglioti E."/>
            <person name="Abreu I.L."/>
            <person name="Alves L.M.C."/>
            <person name="do Amaral A.M."/>
            <person name="Baia G.S."/>
            <person name="Blanco S.R."/>
            <person name="Brito M.S."/>
            <person name="Cannavan F.S."/>
            <person name="Celestino A.V."/>
            <person name="da Cunha A.F."/>
            <person name="Fenille R.C."/>
            <person name="Ferro J.A."/>
            <person name="Formighieri E.F."/>
            <person name="Kishi L.T."/>
            <person name="Leoni S.G."/>
            <person name="Oliveira A.R."/>
            <person name="Rosa V.E. Jr."/>
            <person name="Sassaki F.T."/>
            <person name="Sena J.A.D."/>
            <person name="de Souza A.A."/>
            <person name="Truffi D."/>
            <person name="Tsukumo F."/>
            <person name="Yanai G.M."/>
            <person name="Zaros L.G."/>
            <person name="Civerolo E.L."/>
            <person name="Simpson A.J.G."/>
            <person name="Almeida N.F. Jr."/>
            <person name="Setubal J.C."/>
            <person name="Kitajima J.P."/>
        </authorList>
    </citation>
    <scope>NUCLEOTIDE SEQUENCE [LARGE SCALE GENOMIC DNA]</scope>
    <source>
        <strain>Temecula1 / ATCC 700964</strain>
    </source>
</reference>
<keyword id="KW-0030">Aminoacyl-tRNA synthetase</keyword>
<keyword id="KW-0067">ATP-binding</keyword>
<keyword id="KW-0963">Cytoplasm</keyword>
<keyword id="KW-0436">Ligase</keyword>
<keyword id="KW-0547">Nucleotide-binding</keyword>
<keyword id="KW-0648">Protein biosynthesis</keyword>
<keyword id="KW-1185">Reference proteome</keyword>
<accession>Q87C65</accession>